<protein>
    <recommendedName>
        <fullName evidence="1">Ribulose bisphosphate carboxylase large chain</fullName>
        <shortName evidence="1">RuBisCO large subunit</shortName>
        <ecNumber evidence="1">4.1.1.39</ecNumber>
    </recommendedName>
</protein>
<reference key="1">
    <citation type="journal article" date="1993" name="Ann. Mo. Bot. Gard.">
        <title>Phylogenetic relationships of Cornus L. sensu lato and putative relatives inferred from rbcL sequence data.</title>
        <authorList>
            <person name="Xiang Q.-Y."/>
            <person name="Soltis D.E."/>
            <person name="Morgan D.R."/>
            <person name="Soltis P.S."/>
        </authorList>
        <dbReference type="AGRICOLA" id="IND93053817"/>
    </citation>
    <scope>NUCLEOTIDE SEQUENCE [GENOMIC DNA]</scope>
    <source>
        <tissue>Leaf</tissue>
    </source>
</reference>
<accession>Q32041</accession>
<keyword id="KW-0113">Calvin cycle</keyword>
<keyword id="KW-0120">Carbon dioxide fixation</keyword>
<keyword id="KW-0150">Chloroplast</keyword>
<keyword id="KW-1015">Disulfide bond</keyword>
<keyword id="KW-0456">Lyase</keyword>
<keyword id="KW-0460">Magnesium</keyword>
<keyword id="KW-0479">Metal-binding</keyword>
<keyword id="KW-0488">Methylation</keyword>
<keyword id="KW-0503">Monooxygenase</keyword>
<keyword id="KW-0560">Oxidoreductase</keyword>
<keyword id="KW-0601">Photorespiration</keyword>
<keyword id="KW-0602">Photosynthesis</keyword>
<keyword id="KW-0934">Plastid</keyword>
<organism>
    <name type="scientific">Cornus oblonga</name>
    <dbReference type="NCBI Taxonomy" id="16905"/>
    <lineage>
        <taxon>Eukaryota</taxon>
        <taxon>Viridiplantae</taxon>
        <taxon>Streptophyta</taxon>
        <taxon>Embryophyta</taxon>
        <taxon>Tracheophyta</taxon>
        <taxon>Spermatophyta</taxon>
        <taxon>Magnoliopsida</taxon>
        <taxon>eudicotyledons</taxon>
        <taxon>Gunneridae</taxon>
        <taxon>Pentapetalae</taxon>
        <taxon>asterids</taxon>
        <taxon>Cornales</taxon>
        <taxon>Cornaceae</taxon>
        <taxon>Cornus</taxon>
    </lineage>
</organism>
<evidence type="ECO:0000255" key="1">
    <source>
        <dbReference type="HAMAP-Rule" id="MF_01338"/>
    </source>
</evidence>
<proteinExistence type="inferred from homology"/>
<feature type="chain" id="PRO_0000062423" description="Ribulose bisphosphate carboxylase large chain">
    <location>
        <begin position="1" status="less than"/>
        <end position="465"/>
    </location>
</feature>
<feature type="active site" description="Proton acceptor" evidence="1">
    <location>
        <position position="165"/>
    </location>
</feature>
<feature type="active site" description="Proton acceptor" evidence="1">
    <location>
        <position position="284"/>
    </location>
</feature>
<feature type="binding site" description="in homodimeric partner" evidence="1">
    <location>
        <position position="113"/>
    </location>
    <ligand>
        <name>substrate</name>
    </ligand>
</feature>
<feature type="binding site" evidence="1">
    <location>
        <position position="163"/>
    </location>
    <ligand>
        <name>substrate</name>
    </ligand>
</feature>
<feature type="binding site" evidence="1">
    <location>
        <position position="167"/>
    </location>
    <ligand>
        <name>substrate</name>
    </ligand>
</feature>
<feature type="binding site" description="via carbamate group" evidence="1">
    <location>
        <position position="191"/>
    </location>
    <ligand>
        <name>Mg(2+)</name>
        <dbReference type="ChEBI" id="CHEBI:18420"/>
    </ligand>
</feature>
<feature type="binding site" evidence="1">
    <location>
        <position position="193"/>
    </location>
    <ligand>
        <name>Mg(2+)</name>
        <dbReference type="ChEBI" id="CHEBI:18420"/>
    </ligand>
</feature>
<feature type="binding site" evidence="1">
    <location>
        <position position="194"/>
    </location>
    <ligand>
        <name>Mg(2+)</name>
        <dbReference type="ChEBI" id="CHEBI:18420"/>
    </ligand>
</feature>
<feature type="binding site" evidence="1">
    <location>
        <position position="285"/>
    </location>
    <ligand>
        <name>substrate</name>
    </ligand>
</feature>
<feature type="binding site" evidence="1">
    <location>
        <position position="317"/>
    </location>
    <ligand>
        <name>substrate</name>
    </ligand>
</feature>
<feature type="binding site" evidence="1">
    <location>
        <position position="369"/>
    </location>
    <ligand>
        <name>substrate</name>
    </ligand>
</feature>
<feature type="site" description="Transition state stabilizer" evidence="1">
    <location>
        <position position="324"/>
    </location>
</feature>
<feature type="modified residue" description="N6,N6,N6-trimethyllysine" evidence="1">
    <location>
        <position position="4"/>
    </location>
</feature>
<feature type="modified residue" description="N6-carboxylysine" evidence="1">
    <location>
        <position position="191"/>
    </location>
</feature>
<feature type="disulfide bond" description="Interchain; in linked form" evidence="1">
    <location>
        <position position="237"/>
    </location>
</feature>
<feature type="non-terminal residue">
    <location>
        <position position="1"/>
    </location>
</feature>
<sequence>VGFKAGVKEYKLTYYTPSYETKDTDILAAFRVTPQPGVPPEEAGAAVAAESSTGTWTTVWTDGLTSLDRYKGRCYHIEPVAGEETQFIAYVAYPLDLFEEGSVTNMFTSIVGNVFGFKALRALRLEDLRIPPAYVKTFQGPPHGIQVERDKLNKYGRPLLGCTIKPKLGLSAKNYGRAVYECLRGGLDFTKDDENVNSQPFMRWRDRFLFCTEALYKAQSETGEIKGHYLNATAGTCEEMIKRAVFARELGVPIVMHDYLTGGFTANTSLAHYCRDNGLLLHIHRAMHAVIDRQKNHGIHFRVLAKALRMSGGDHIHSGTVVGKLEGEREITLGFVDLLRDDFIEKDRSRGLFFTQDWVSLPGVLPVASGGIHVWHMPALTEIFGDDSVLQFGGGTLGHPWGNAPGAVANRVALEACVQARNEGRDLAREGNEIIREASKWSPELAAACEIWKEIKFEFEAMDTL</sequence>
<name>RBL_COROL</name>
<geneLocation type="chloroplast"/>
<gene>
    <name evidence="1" type="primary">rbcL</name>
</gene>
<dbReference type="EC" id="4.1.1.39" evidence="1"/>
<dbReference type="EMBL" id="L11218">
    <property type="protein sequence ID" value="AAA84167.2"/>
    <property type="molecule type" value="Genomic_DNA"/>
</dbReference>
<dbReference type="SMR" id="Q32041"/>
<dbReference type="GO" id="GO:0009507">
    <property type="term" value="C:chloroplast"/>
    <property type="evidence" value="ECO:0007669"/>
    <property type="project" value="UniProtKB-SubCell"/>
</dbReference>
<dbReference type="GO" id="GO:0000287">
    <property type="term" value="F:magnesium ion binding"/>
    <property type="evidence" value="ECO:0007669"/>
    <property type="project" value="InterPro"/>
</dbReference>
<dbReference type="GO" id="GO:0004497">
    <property type="term" value="F:monooxygenase activity"/>
    <property type="evidence" value="ECO:0007669"/>
    <property type="project" value="UniProtKB-KW"/>
</dbReference>
<dbReference type="GO" id="GO:0016984">
    <property type="term" value="F:ribulose-bisphosphate carboxylase activity"/>
    <property type="evidence" value="ECO:0007669"/>
    <property type="project" value="UniProtKB-EC"/>
</dbReference>
<dbReference type="GO" id="GO:0009853">
    <property type="term" value="P:photorespiration"/>
    <property type="evidence" value="ECO:0007669"/>
    <property type="project" value="UniProtKB-KW"/>
</dbReference>
<dbReference type="GO" id="GO:0019253">
    <property type="term" value="P:reductive pentose-phosphate cycle"/>
    <property type="evidence" value="ECO:0007669"/>
    <property type="project" value="UniProtKB-KW"/>
</dbReference>
<dbReference type="CDD" id="cd08212">
    <property type="entry name" value="RuBisCO_large_I"/>
    <property type="match status" value="1"/>
</dbReference>
<dbReference type="FunFam" id="3.20.20.110:FF:000001">
    <property type="entry name" value="Ribulose bisphosphate carboxylase large chain"/>
    <property type="match status" value="1"/>
</dbReference>
<dbReference type="FunFam" id="3.30.70.150:FF:000001">
    <property type="entry name" value="Ribulose bisphosphate carboxylase large chain"/>
    <property type="match status" value="1"/>
</dbReference>
<dbReference type="Gene3D" id="3.20.20.110">
    <property type="entry name" value="Ribulose bisphosphate carboxylase, large subunit, C-terminal domain"/>
    <property type="match status" value="1"/>
</dbReference>
<dbReference type="Gene3D" id="3.30.70.150">
    <property type="entry name" value="RuBisCO large subunit, N-terminal domain"/>
    <property type="match status" value="1"/>
</dbReference>
<dbReference type="HAMAP" id="MF_01338">
    <property type="entry name" value="RuBisCO_L_type1"/>
    <property type="match status" value="1"/>
</dbReference>
<dbReference type="InterPro" id="IPR033966">
    <property type="entry name" value="RuBisCO"/>
</dbReference>
<dbReference type="InterPro" id="IPR020878">
    <property type="entry name" value="RuBisCo_large_chain_AS"/>
</dbReference>
<dbReference type="InterPro" id="IPR000685">
    <property type="entry name" value="RuBisCO_lsu_C"/>
</dbReference>
<dbReference type="InterPro" id="IPR036376">
    <property type="entry name" value="RuBisCO_lsu_C_sf"/>
</dbReference>
<dbReference type="InterPro" id="IPR017443">
    <property type="entry name" value="RuBisCO_lsu_fd_N"/>
</dbReference>
<dbReference type="InterPro" id="IPR036422">
    <property type="entry name" value="RuBisCO_lsu_N_sf"/>
</dbReference>
<dbReference type="InterPro" id="IPR020888">
    <property type="entry name" value="RuBisCO_lsuI"/>
</dbReference>
<dbReference type="NCBIfam" id="NF003252">
    <property type="entry name" value="PRK04208.1"/>
    <property type="match status" value="1"/>
</dbReference>
<dbReference type="PANTHER" id="PTHR42704">
    <property type="entry name" value="RIBULOSE BISPHOSPHATE CARBOXYLASE"/>
    <property type="match status" value="1"/>
</dbReference>
<dbReference type="PANTHER" id="PTHR42704:SF16">
    <property type="entry name" value="RIBULOSE BISPHOSPHATE CARBOXYLASE LARGE CHAIN"/>
    <property type="match status" value="1"/>
</dbReference>
<dbReference type="Pfam" id="PF00016">
    <property type="entry name" value="RuBisCO_large"/>
    <property type="match status" value="1"/>
</dbReference>
<dbReference type="Pfam" id="PF02788">
    <property type="entry name" value="RuBisCO_large_N"/>
    <property type="match status" value="1"/>
</dbReference>
<dbReference type="SFLD" id="SFLDG01052">
    <property type="entry name" value="RuBisCO"/>
    <property type="match status" value="1"/>
</dbReference>
<dbReference type="SFLD" id="SFLDS00014">
    <property type="entry name" value="RuBisCO"/>
    <property type="match status" value="1"/>
</dbReference>
<dbReference type="SFLD" id="SFLDG00301">
    <property type="entry name" value="RuBisCO-like_proteins"/>
    <property type="match status" value="1"/>
</dbReference>
<dbReference type="SUPFAM" id="SSF51649">
    <property type="entry name" value="RuBisCo, C-terminal domain"/>
    <property type="match status" value="1"/>
</dbReference>
<dbReference type="SUPFAM" id="SSF54966">
    <property type="entry name" value="RuBisCO, large subunit, small (N-terminal) domain"/>
    <property type="match status" value="1"/>
</dbReference>
<dbReference type="PROSITE" id="PS00157">
    <property type="entry name" value="RUBISCO_LARGE"/>
    <property type="match status" value="1"/>
</dbReference>
<comment type="function">
    <text evidence="1">RuBisCO catalyzes two reactions: the carboxylation of D-ribulose 1,5-bisphosphate, the primary event in carbon dioxide fixation, as well as the oxidative fragmentation of the pentose substrate in the photorespiration process. Both reactions occur simultaneously and in competition at the same active site.</text>
</comment>
<comment type="catalytic activity">
    <reaction evidence="1">
        <text>2 (2R)-3-phosphoglycerate + 2 H(+) = D-ribulose 1,5-bisphosphate + CO2 + H2O</text>
        <dbReference type="Rhea" id="RHEA:23124"/>
        <dbReference type="ChEBI" id="CHEBI:15377"/>
        <dbReference type="ChEBI" id="CHEBI:15378"/>
        <dbReference type="ChEBI" id="CHEBI:16526"/>
        <dbReference type="ChEBI" id="CHEBI:57870"/>
        <dbReference type="ChEBI" id="CHEBI:58272"/>
        <dbReference type="EC" id="4.1.1.39"/>
    </reaction>
</comment>
<comment type="catalytic activity">
    <reaction evidence="1">
        <text>D-ribulose 1,5-bisphosphate + O2 = 2-phosphoglycolate + (2R)-3-phosphoglycerate + 2 H(+)</text>
        <dbReference type="Rhea" id="RHEA:36631"/>
        <dbReference type="ChEBI" id="CHEBI:15378"/>
        <dbReference type="ChEBI" id="CHEBI:15379"/>
        <dbReference type="ChEBI" id="CHEBI:57870"/>
        <dbReference type="ChEBI" id="CHEBI:58033"/>
        <dbReference type="ChEBI" id="CHEBI:58272"/>
    </reaction>
</comment>
<comment type="cofactor">
    <cofactor evidence="1">
        <name>Mg(2+)</name>
        <dbReference type="ChEBI" id="CHEBI:18420"/>
    </cofactor>
    <text evidence="1">Binds 1 Mg(2+) ion per subunit.</text>
</comment>
<comment type="subunit">
    <text evidence="1">Heterohexadecamer of 8 large chains and 8 small chains; disulfide-linked. The disulfide link is formed within the large subunit homodimers.</text>
</comment>
<comment type="subcellular location">
    <subcellularLocation>
        <location>Plastid</location>
        <location>Chloroplast</location>
    </subcellularLocation>
</comment>
<comment type="PTM">
    <text evidence="1">The disulfide bond which can form in the large chain dimeric partners within the hexadecamer appears to be associated with oxidative stress and protein turnover.</text>
</comment>
<comment type="miscellaneous">
    <text evidence="1">The basic functional RuBisCO is composed of a large chain homodimer in a 'head-to-tail' conformation. In form I RuBisCO this homodimer is arranged in a barrel-like tetramer with the small subunits forming a tetrameric 'cap' on each end of the 'barrel'.</text>
</comment>
<comment type="similarity">
    <text evidence="1">Belongs to the RuBisCO large chain family. Type I subfamily.</text>
</comment>